<dbReference type="EC" id="2.4.2.10" evidence="1"/>
<dbReference type="EMBL" id="CP000774">
    <property type="protein sequence ID" value="ABS64476.1"/>
    <property type="molecule type" value="Genomic_DNA"/>
</dbReference>
<dbReference type="RefSeq" id="WP_012111792.1">
    <property type="nucleotide sequence ID" value="NC_009719.1"/>
</dbReference>
<dbReference type="SMR" id="A7HX43"/>
<dbReference type="STRING" id="402881.Plav_2869"/>
<dbReference type="KEGG" id="pla:Plav_2869"/>
<dbReference type="eggNOG" id="COG0461">
    <property type="taxonomic scope" value="Bacteria"/>
</dbReference>
<dbReference type="HOGENOM" id="CLU_074878_3_0_5"/>
<dbReference type="OrthoDB" id="9783570at2"/>
<dbReference type="UniPathway" id="UPA00070">
    <property type="reaction ID" value="UER00119"/>
</dbReference>
<dbReference type="Proteomes" id="UP000006377">
    <property type="component" value="Chromosome"/>
</dbReference>
<dbReference type="GO" id="GO:0000287">
    <property type="term" value="F:magnesium ion binding"/>
    <property type="evidence" value="ECO:0007669"/>
    <property type="project" value="UniProtKB-UniRule"/>
</dbReference>
<dbReference type="GO" id="GO:0004588">
    <property type="term" value="F:orotate phosphoribosyltransferase activity"/>
    <property type="evidence" value="ECO:0007669"/>
    <property type="project" value="UniProtKB-UniRule"/>
</dbReference>
<dbReference type="GO" id="GO:0044205">
    <property type="term" value="P:'de novo' UMP biosynthetic process"/>
    <property type="evidence" value="ECO:0007669"/>
    <property type="project" value="UniProtKB-UniRule"/>
</dbReference>
<dbReference type="GO" id="GO:0019856">
    <property type="term" value="P:pyrimidine nucleobase biosynthetic process"/>
    <property type="evidence" value="ECO:0007669"/>
    <property type="project" value="InterPro"/>
</dbReference>
<dbReference type="CDD" id="cd06223">
    <property type="entry name" value="PRTases_typeI"/>
    <property type="match status" value="1"/>
</dbReference>
<dbReference type="Gene3D" id="3.40.50.2020">
    <property type="match status" value="1"/>
</dbReference>
<dbReference type="HAMAP" id="MF_01208">
    <property type="entry name" value="PyrE"/>
    <property type="match status" value="1"/>
</dbReference>
<dbReference type="InterPro" id="IPR023031">
    <property type="entry name" value="OPRT"/>
</dbReference>
<dbReference type="InterPro" id="IPR006273">
    <property type="entry name" value="Orotate_PRibTrfase_bac"/>
</dbReference>
<dbReference type="InterPro" id="IPR000836">
    <property type="entry name" value="PRibTrfase_dom"/>
</dbReference>
<dbReference type="InterPro" id="IPR029057">
    <property type="entry name" value="PRTase-like"/>
</dbReference>
<dbReference type="NCBIfam" id="TIGR01367">
    <property type="entry name" value="pyrE_Therm"/>
    <property type="match status" value="1"/>
</dbReference>
<dbReference type="PANTHER" id="PTHR19278">
    <property type="entry name" value="OROTATE PHOSPHORIBOSYLTRANSFERASE"/>
    <property type="match status" value="1"/>
</dbReference>
<dbReference type="PANTHER" id="PTHR19278:SF9">
    <property type="entry name" value="URIDINE 5'-MONOPHOSPHATE SYNTHASE"/>
    <property type="match status" value="1"/>
</dbReference>
<dbReference type="Pfam" id="PF00156">
    <property type="entry name" value="Pribosyltran"/>
    <property type="match status" value="1"/>
</dbReference>
<dbReference type="SUPFAM" id="SSF53271">
    <property type="entry name" value="PRTase-like"/>
    <property type="match status" value="1"/>
</dbReference>
<dbReference type="PROSITE" id="PS00103">
    <property type="entry name" value="PUR_PYR_PR_TRANSFER"/>
    <property type="match status" value="1"/>
</dbReference>
<sequence length="194" mass="20935">MDQEKVLKEFEKAGALLRGHFILSSGLHSPVFLQKALVFMNPQRTGRLCKALAEKIRQEVKGPIDAIVSPAVGGIIPGYETARYMKVPAMYVEREQGEFVLRRGFPLTKGMRVVMVEDIVTTGLSSRECIEAIGKTGAKVVAAACLIDRSGGKAKVGTKLISLARIAIPAYAPDKLPKELAALPAEKPGSRHIA</sequence>
<protein>
    <recommendedName>
        <fullName evidence="1">Orotate phosphoribosyltransferase</fullName>
        <shortName evidence="1">OPRT</shortName>
        <shortName evidence="1">OPRTase</shortName>
        <ecNumber evidence="1">2.4.2.10</ecNumber>
    </recommendedName>
</protein>
<name>PYRE_PARL1</name>
<feature type="chain" id="PRO_1000073109" description="Orotate phosphoribosyltransferase">
    <location>
        <begin position="1"/>
        <end position="194"/>
    </location>
</feature>
<feature type="binding site" evidence="1">
    <location>
        <begin position="117"/>
        <end position="125"/>
    </location>
    <ligand>
        <name>5-phospho-alpha-D-ribose 1-diphosphate</name>
        <dbReference type="ChEBI" id="CHEBI:58017"/>
    </ligand>
</feature>
<feature type="binding site" evidence="1">
    <location>
        <position position="121"/>
    </location>
    <ligand>
        <name>orotate</name>
        <dbReference type="ChEBI" id="CHEBI:30839"/>
    </ligand>
</feature>
<feature type="binding site" evidence="1">
    <location>
        <position position="149"/>
    </location>
    <ligand>
        <name>orotate</name>
        <dbReference type="ChEBI" id="CHEBI:30839"/>
    </ligand>
</feature>
<reference key="1">
    <citation type="journal article" date="2011" name="Stand. Genomic Sci.">
        <title>Complete genome sequence of Parvibaculum lavamentivorans type strain (DS-1(T)).</title>
        <authorList>
            <person name="Schleheck D."/>
            <person name="Weiss M."/>
            <person name="Pitluck S."/>
            <person name="Bruce D."/>
            <person name="Land M.L."/>
            <person name="Han S."/>
            <person name="Saunders E."/>
            <person name="Tapia R."/>
            <person name="Detter C."/>
            <person name="Brettin T."/>
            <person name="Han J."/>
            <person name="Woyke T."/>
            <person name="Goodwin L."/>
            <person name="Pennacchio L."/>
            <person name="Nolan M."/>
            <person name="Cook A.M."/>
            <person name="Kjelleberg S."/>
            <person name="Thomas T."/>
        </authorList>
    </citation>
    <scope>NUCLEOTIDE SEQUENCE [LARGE SCALE GENOMIC DNA]</scope>
    <source>
        <strain>DS-1 / DSM 13023 / NCIMB 13966</strain>
    </source>
</reference>
<proteinExistence type="inferred from homology"/>
<organism>
    <name type="scientific">Parvibaculum lavamentivorans (strain DS-1 / DSM 13023 / NCIMB 13966)</name>
    <dbReference type="NCBI Taxonomy" id="402881"/>
    <lineage>
        <taxon>Bacteria</taxon>
        <taxon>Pseudomonadati</taxon>
        <taxon>Pseudomonadota</taxon>
        <taxon>Alphaproteobacteria</taxon>
        <taxon>Hyphomicrobiales</taxon>
        <taxon>Parvibaculaceae</taxon>
        <taxon>Parvibaculum</taxon>
    </lineage>
</organism>
<accession>A7HX43</accession>
<comment type="function">
    <text evidence="1">Catalyzes the transfer of a ribosyl phosphate group from 5-phosphoribose 1-diphosphate to orotate, leading to the formation of orotidine monophosphate (OMP).</text>
</comment>
<comment type="catalytic activity">
    <reaction evidence="1">
        <text>orotidine 5'-phosphate + diphosphate = orotate + 5-phospho-alpha-D-ribose 1-diphosphate</text>
        <dbReference type="Rhea" id="RHEA:10380"/>
        <dbReference type="ChEBI" id="CHEBI:30839"/>
        <dbReference type="ChEBI" id="CHEBI:33019"/>
        <dbReference type="ChEBI" id="CHEBI:57538"/>
        <dbReference type="ChEBI" id="CHEBI:58017"/>
        <dbReference type="EC" id="2.4.2.10"/>
    </reaction>
</comment>
<comment type="cofactor">
    <cofactor evidence="1">
        <name>Mg(2+)</name>
        <dbReference type="ChEBI" id="CHEBI:18420"/>
    </cofactor>
</comment>
<comment type="pathway">
    <text evidence="1">Pyrimidine metabolism; UMP biosynthesis via de novo pathway; UMP from orotate: step 1/2.</text>
</comment>
<comment type="subunit">
    <text evidence="1">Homodimer.</text>
</comment>
<comment type="similarity">
    <text evidence="1">Belongs to the purine/pyrimidine phosphoribosyltransferase family. PyrE subfamily.</text>
</comment>
<gene>
    <name evidence="1" type="primary">pyrE</name>
    <name type="ordered locus">Plav_2869</name>
</gene>
<evidence type="ECO:0000255" key="1">
    <source>
        <dbReference type="HAMAP-Rule" id="MF_01208"/>
    </source>
</evidence>
<keyword id="KW-0328">Glycosyltransferase</keyword>
<keyword id="KW-0460">Magnesium</keyword>
<keyword id="KW-0665">Pyrimidine biosynthesis</keyword>
<keyword id="KW-1185">Reference proteome</keyword>
<keyword id="KW-0808">Transferase</keyword>